<organism>
    <name type="scientific">Xanthomonas campestris pv. campestris (strain ATCC 33913 / DSM 3586 / NCPPB 528 / LMG 568 / P 25)</name>
    <dbReference type="NCBI Taxonomy" id="190485"/>
    <lineage>
        <taxon>Bacteria</taxon>
        <taxon>Pseudomonadati</taxon>
        <taxon>Pseudomonadota</taxon>
        <taxon>Gammaproteobacteria</taxon>
        <taxon>Lysobacterales</taxon>
        <taxon>Lysobacteraceae</taxon>
        <taxon>Xanthomonas</taxon>
    </lineage>
</organism>
<feature type="chain" id="PRO_0000149881" description="Diaminopimelate epimerase">
    <location>
        <begin position="1"/>
        <end position="284"/>
    </location>
</feature>
<feature type="active site" description="Proton donor" evidence="1">
    <location>
        <position position="82"/>
    </location>
</feature>
<feature type="active site" description="Proton acceptor" evidence="1">
    <location>
        <position position="227"/>
    </location>
</feature>
<feature type="binding site" evidence="1">
    <location>
        <position position="20"/>
    </location>
    <ligand>
        <name>substrate</name>
    </ligand>
</feature>
<feature type="binding site" evidence="1">
    <location>
        <position position="53"/>
    </location>
    <ligand>
        <name>substrate</name>
    </ligand>
</feature>
<feature type="binding site" evidence="1">
    <location>
        <position position="73"/>
    </location>
    <ligand>
        <name>substrate</name>
    </ligand>
</feature>
<feature type="binding site" evidence="1">
    <location>
        <begin position="83"/>
        <end position="84"/>
    </location>
    <ligand>
        <name>substrate</name>
    </ligand>
</feature>
<feature type="binding site" evidence="1">
    <location>
        <position position="167"/>
    </location>
    <ligand>
        <name>substrate</name>
    </ligand>
</feature>
<feature type="binding site" evidence="1">
    <location>
        <position position="200"/>
    </location>
    <ligand>
        <name>substrate</name>
    </ligand>
</feature>
<feature type="binding site" evidence="1">
    <location>
        <begin position="218"/>
        <end position="219"/>
    </location>
    <ligand>
        <name>substrate</name>
    </ligand>
</feature>
<feature type="binding site" evidence="1">
    <location>
        <begin position="228"/>
        <end position="229"/>
    </location>
    <ligand>
        <name>substrate</name>
    </ligand>
</feature>
<feature type="site" description="Could be important to modulate the pK values of the two catalytic cysteine residues" evidence="1">
    <location>
        <position position="169"/>
    </location>
</feature>
<feature type="site" description="Could be important to modulate the pK values of the two catalytic cysteine residues" evidence="1">
    <location>
        <position position="218"/>
    </location>
</feature>
<feature type="site" description="Important for dimerization" evidence="1">
    <location>
        <position position="278"/>
    </location>
</feature>
<dbReference type="EC" id="5.1.1.7" evidence="1"/>
<dbReference type="EMBL" id="AE008922">
    <property type="protein sequence ID" value="AAM42769.1"/>
    <property type="molecule type" value="Genomic_DNA"/>
</dbReference>
<dbReference type="RefSeq" id="NP_638845.1">
    <property type="nucleotide sequence ID" value="NC_003902.1"/>
</dbReference>
<dbReference type="RefSeq" id="WP_011038591.1">
    <property type="nucleotide sequence ID" value="NC_003902.1"/>
</dbReference>
<dbReference type="SMR" id="Q8P548"/>
<dbReference type="STRING" id="190485.XCC3499"/>
<dbReference type="EnsemblBacteria" id="AAM42769">
    <property type="protein sequence ID" value="AAM42769"/>
    <property type="gene ID" value="XCC3499"/>
</dbReference>
<dbReference type="GeneID" id="58011971"/>
<dbReference type="KEGG" id="xcc:XCC3499"/>
<dbReference type="PATRIC" id="fig|190485.4.peg.3742"/>
<dbReference type="eggNOG" id="COG0253">
    <property type="taxonomic scope" value="Bacteria"/>
</dbReference>
<dbReference type="HOGENOM" id="CLU_053306_1_1_6"/>
<dbReference type="OrthoDB" id="9805408at2"/>
<dbReference type="UniPathway" id="UPA00034">
    <property type="reaction ID" value="UER00025"/>
</dbReference>
<dbReference type="Proteomes" id="UP000001010">
    <property type="component" value="Chromosome"/>
</dbReference>
<dbReference type="GO" id="GO:0005829">
    <property type="term" value="C:cytosol"/>
    <property type="evidence" value="ECO:0000318"/>
    <property type="project" value="GO_Central"/>
</dbReference>
<dbReference type="GO" id="GO:0008837">
    <property type="term" value="F:diaminopimelate epimerase activity"/>
    <property type="evidence" value="ECO:0000318"/>
    <property type="project" value="GO_Central"/>
</dbReference>
<dbReference type="GO" id="GO:0009089">
    <property type="term" value="P:lysine biosynthetic process via diaminopimelate"/>
    <property type="evidence" value="ECO:0000318"/>
    <property type="project" value="GO_Central"/>
</dbReference>
<dbReference type="FunFam" id="3.10.310.10:FF:000001">
    <property type="entry name" value="Diaminopimelate epimerase"/>
    <property type="match status" value="1"/>
</dbReference>
<dbReference type="FunFam" id="3.10.310.10:FF:000004">
    <property type="entry name" value="Diaminopimelate epimerase"/>
    <property type="match status" value="1"/>
</dbReference>
<dbReference type="Gene3D" id="3.10.310.10">
    <property type="entry name" value="Diaminopimelate Epimerase, Chain A, domain 1"/>
    <property type="match status" value="2"/>
</dbReference>
<dbReference type="HAMAP" id="MF_00197">
    <property type="entry name" value="DAP_epimerase"/>
    <property type="match status" value="1"/>
</dbReference>
<dbReference type="InterPro" id="IPR018510">
    <property type="entry name" value="DAP_epimerase_AS"/>
</dbReference>
<dbReference type="InterPro" id="IPR001653">
    <property type="entry name" value="DAP_epimerase_DapF"/>
</dbReference>
<dbReference type="NCBIfam" id="TIGR00652">
    <property type="entry name" value="DapF"/>
    <property type="match status" value="1"/>
</dbReference>
<dbReference type="PANTHER" id="PTHR31689:SF0">
    <property type="entry name" value="DIAMINOPIMELATE EPIMERASE"/>
    <property type="match status" value="1"/>
</dbReference>
<dbReference type="PANTHER" id="PTHR31689">
    <property type="entry name" value="DIAMINOPIMELATE EPIMERASE, CHLOROPLASTIC"/>
    <property type="match status" value="1"/>
</dbReference>
<dbReference type="Pfam" id="PF01678">
    <property type="entry name" value="DAP_epimerase"/>
    <property type="match status" value="2"/>
</dbReference>
<dbReference type="SUPFAM" id="SSF54506">
    <property type="entry name" value="Diaminopimelate epimerase-like"/>
    <property type="match status" value="2"/>
</dbReference>
<dbReference type="PROSITE" id="PS01326">
    <property type="entry name" value="DAP_EPIMERASE"/>
    <property type="match status" value="1"/>
</dbReference>
<proteinExistence type="inferred from homology"/>
<name>DAPF_XANCP</name>
<accession>Q8P548</accession>
<evidence type="ECO:0000255" key="1">
    <source>
        <dbReference type="HAMAP-Rule" id="MF_00197"/>
    </source>
</evidence>
<protein>
    <recommendedName>
        <fullName evidence="1">Diaminopimelate epimerase</fullName>
        <shortName evidence="1">DAP epimerase</shortName>
        <ecNumber evidence="1">5.1.1.7</ecNumber>
    </recommendedName>
    <alternativeName>
        <fullName evidence="1">PLP-independent amino acid racemase</fullName>
    </alternativeName>
</protein>
<keyword id="KW-0028">Amino-acid biosynthesis</keyword>
<keyword id="KW-0963">Cytoplasm</keyword>
<keyword id="KW-0413">Isomerase</keyword>
<keyword id="KW-0457">Lysine biosynthesis</keyword>
<keyword id="KW-1185">Reference proteome</keyword>
<gene>
    <name evidence="1" type="primary">dapF</name>
    <name type="ordered locus">XCC3499</name>
</gene>
<comment type="function">
    <text evidence="1">Catalyzes the stereoinversion of LL-2,6-diaminopimelate (L,L-DAP) to meso-diaminopimelate (meso-DAP), a precursor of L-lysine and an essential component of the bacterial peptidoglycan.</text>
</comment>
<comment type="catalytic activity">
    <reaction evidence="1">
        <text>(2S,6S)-2,6-diaminopimelate = meso-2,6-diaminopimelate</text>
        <dbReference type="Rhea" id="RHEA:15393"/>
        <dbReference type="ChEBI" id="CHEBI:57609"/>
        <dbReference type="ChEBI" id="CHEBI:57791"/>
        <dbReference type="EC" id="5.1.1.7"/>
    </reaction>
</comment>
<comment type="pathway">
    <text evidence="1">Amino-acid biosynthesis; L-lysine biosynthesis via DAP pathway; DL-2,6-diaminopimelate from LL-2,6-diaminopimelate: step 1/1.</text>
</comment>
<comment type="subunit">
    <text evidence="1">Homodimer.</text>
</comment>
<comment type="subcellular location">
    <subcellularLocation>
        <location evidence="1">Cytoplasm</location>
    </subcellularLocation>
</comment>
<comment type="similarity">
    <text evidence="1">Belongs to the diaminopimelate epimerase family.</text>
</comment>
<reference key="1">
    <citation type="journal article" date="2002" name="Nature">
        <title>Comparison of the genomes of two Xanthomonas pathogens with differing host specificities.</title>
        <authorList>
            <person name="da Silva A.C.R."/>
            <person name="Ferro J.A."/>
            <person name="Reinach F.C."/>
            <person name="Farah C.S."/>
            <person name="Furlan L.R."/>
            <person name="Quaggio R.B."/>
            <person name="Monteiro-Vitorello C.B."/>
            <person name="Van Sluys M.A."/>
            <person name="Almeida N.F. Jr."/>
            <person name="Alves L.M.C."/>
            <person name="do Amaral A.M."/>
            <person name="Bertolini M.C."/>
            <person name="Camargo L.E.A."/>
            <person name="Camarotte G."/>
            <person name="Cannavan F."/>
            <person name="Cardozo J."/>
            <person name="Chambergo F."/>
            <person name="Ciapina L.P."/>
            <person name="Cicarelli R.M.B."/>
            <person name="Coutinho L.L."/>
            <person name="Cursino-Santos J.R."/>
            <person name="El-Dorry H."/>
            <person name="Faria J.B."/>
            <person name="Ferreira A.J.S."/>
            <person name="Ferreira R.C.C."/>
            <person name="Ferro M.I.T."/>
            <person name="Formighieri E.F."/>
            <person name="Franco M.C."/>
            <person name="Greggio C.C."/>
            <person name="Gruber A."/>
            <person name="Katsuyama A.M."/>
            <person name="Kishi L.T."/>
            <person name="Leite R.P."/>
            <person name="Lemos E.G.M."/>
            <person name="Lemos M.V.F."/>
            <person name="Locali E.C."/>
            <person name="Machado M.A."/>
            <person name="Madeira A.M.B.N."/>
            <person name="Martinez-Rossi N.M."/>
            <person name="Martins E.C."/>
            <person name="Meidanis J."/>
            <person name="Menck C.F.M."/>
            <person name="Miyaki C.Y."/>
            <person name="Moon D.H."/>
            <person name="Moreira L.M."/>
            <person name="Novo M.T.M."/>
            <person name="Okura V.K."/>
            <person name="Oliveira M.C."/>
            <person name="Oliveira V.R."/>
            <person name="Pereira H.A."/>
            <person name="Rossi A."/>
            <person name="Sena J.A.D."/>
            <person name="Silva C."/>
            <person name="de Souza R.F."/>
            <person name="Spinola L.A.F."/>
            <person name="Takita M.A."/>
            <person name="Tamura R.E."/>
            <person name="Teixeira E.C."/>
            <person name="Tezza R.I.D."/>
            <person name="Trindade dos Santos M."/>
            <person name="Truffi D."/>
            <person name="Tsai S.M."/>
            <person name="White F.F."/>
            <person name="Setubal J.C."/>
            <person name="Kitajima J.P."/>
        </authorList>
    </citation>
    <scope>NUCLEOTIDE SEQUENCE [LARGE SCALE GENOMIC DNA]</scope>
    <source>
        <strain>ATCC 33913 / DSM 3586 / NCPPB 528 / LMG 568 / P 25</strain>
    </source>
</reference>
<sequence length="284" mass="30361">MSADVHTGRLRFTKMHGAGNDFVVLDLRNGTPPPDASLAARLADRHFGVGCDQILTIETPRSAEAVAAYRIWNSDGSHSQQCGNGARCVAAWLVREGTAQGDVFTIDSPFTAHRVERLDAGTYSVAMGVPQFEPTQIPLAGFAHARDEYALPVHGETVRFGAVSMGNPHAVVEVGRVDAAPVERVGALLQQNAAFPESVNVGFAQVVDPAHVRLRVYERGVGETLACGSGACAAAVVLMHRGRVERDVRVSLPGGELRIRWAGEQAQVVMSGPAVFVFDGEWNQ</sequence>